<dbReference type="EC" id="2.5.1.16" evidence="1"/>
<dbReference type="EMBL" id="CP000721">
    <property type="protein sequence ID" value="ABR36519.1"/>
    <property type="molecule type" value="Genomic_DNA"/>
</dbReference>
<dbReference type="RefSeq" id="WP_012060566.1">
    <property type="nucleotide sequence ID" value="NC_009617.1"/>
</dbReference>
<dbReference type="SMR" id="A6M1N9"/>
<dbReference type="KEGG" id="cbe:Cbei_4410"/>
<dbReference type="eggNOG" id="COG0421">
    <property type="taxonomic scope" value="Bacteria"/>
</dbReference>
<dbReference type="HOGENOM" id="CLU_048199_0_0_9"/>
<dbReference type="UniPathway" id="UPA00248">
    <property type="reaction ID" value="UER00314"/>
</dbReference>
<dbReference type="Proteomes" id="UP000000565">
    <property type="component" value="Chromosome"/>
</dbReference>
<dbReference type="GO" id="GO:0005829">
    <property type="term" value="C:cytosol"/>
    <property type="evidence" value="ECO:0007669"/>
    <property type="project" value="TreeGrafter"/>
</dbReference>
<dbReference type="GO" id="GO:0004766">
    <property type="term" value="F:spermidine synthase activity"/>
    <property type="evidence" value="ECO:0007669"/>
    <property type="project" value="UniProtKB-UniRule"/>
</dbReference>
<dbReference type="GO" id="GO:0008295">
    <property type="term" value="P:spermidine biosynthetic process"/>
    <property type="evidence" value="ECO:0007669"/>
    <property type="project" value="UniProtKB-UniRule"/>
</dbReference>
<dbReference type="CDD" id="cd02440">
    <property type="entry name" value="AdoMet_MTases"/>
    <property type="match status" value="1"/>
</dbReference>
<dbReference type="Gene3D" id="2.30.140.10">
    <property type="entry name" value="Spermidine synthase, tetramerisation domain"/>
    <property type="match status" value="1"/>
</dbReference>
<dbReference type="Gene3D" id="3.40.50.150">
    <property type="entry name" value="Vaccinia Virus protein VP39"/>
    <property type="match status" value="1"/>
</dbReference>
<dbReference type="HAMAP" id="MF_00198">
    <property type="entry name" value="Spermidine_synth"/>
    <property type="match status" value="1"/>
</dbReference>
<dbReference type="InterPro" id="IPR030374">
    <property type="entry name" value="PABS"/>
</dbReference>
<dbReference type="InterPro" id="IPR029063">
    <property type="entry name" value="SAM-dependent_MTases_sf"/>
</dbReference>
<dbReference type="InterPro" id="IPR001045">
    <property type="entry name" value="Spermi_synthase"/>
</dbReference>
<dbReference type="InterPro" id="IPR035246">
    <property type="entry name" value="Spermidine_synt_N"/>
</dbReference>
<dbReference type="InterPro" id="IPR037163">
    <property type="entry name" value="Spermidine_synt_N_sf"/>
</dbReference>
<dbReference type="NCBIfam" id="NF002010">
    <property type="entry name" value="PRK00811.1"/>
    <property type="match status" value="1"/>
</dbReference>
<dbReference type="NCBIfam" id="TIGR00417">
    <property type="entry name" value="speE"/>
    <property type="match status" value="1"/>
</dbReference>
<dbReference type="PANTHER" id="PTHR11558:SF11">
    <property type="entry name" value="SPERMIDINE SYNTHASE"/>
    <property type="match status" value="1"/>
</dbReference>
<dbReference type="PANTHER" id="PTHR11558">
    <property type="entry name" value="SPERMIDINE/SPERMINE SYNTHASE"/>
    <property type="match status" value="1"/>
</dbReference>
<dbReference type="Pfam" id="PF17284">
    <property type="entry name" value="Spermine_synt_N"/>
    <property type="match status" value="1"/>
</dbReference>
<dbReference type="Pfam" id="PF01564">
    <property type="entry name" value="Spermine_synth"/>
    <property type="match status" value="1"/>
</dbReference>
<dbReference type="SUPFAM" id="SSF53335">
    <property type="entry name" value="S-adenosyl-L-methionine-dependent methyltransferases"/>
    <property type="match status" value="1"/>
</dbReference>
<dbReference type="PROSITE" id="PS51006">
    <property type="entry name" value="PABS_2"/>
    <property type="match status" value="1"/>
</dbReference>
<gene>
    <name evidence="1" type="primary">speE</name>
    <name type="ordered locus">Cbei_4410</name>
</gene>
<accession>A6M1N9</accession>
<keyword id="KW-0963">Cytoplasm</keyword>
<keyword id="KW-0620">Polyamine biosynthesis</keyword>
<keyword id="KW-0745">Spermidine biosynthesis</keyword>
<keyword id="KW-0808">Transferase</keyword>
<name>SPEE_CLOB8</name>
<comment type="function">
    <text evidence="1">Catalyzes the irreversible transfer of a propylamine group from the amino donor S-adenosylmethioninamine (decarboxy-AdoMet) to putrescine (1,4-diaminobutane) to yield spermidine.</text>
</comment>
<comment type="catalytic activity">
    <reaction evidence="1">
        <text>S-adenosyl 3-(methylsulfanyl)propylamine + putrescine = S-methyl-5'-thioadenosine + spermidine + H(+)</text>
        <dbReference type="Rhea" id="RHEA:12721"/>
        <dbReference type="ChEBI" id="CHEBI:15378"/>
        <dbReference type="ChEBI" id="CHEBI:17509"/>
        <dbReference type="ChEBI" id="CHEBI:57443"/>
        <dbReference type="ChEBI" id="CHEBI:57834"/>
        <dbReference type="ChEBI" id="CHEBI:326268"/>
        <dbReference type="EC" id="2.5.1.16"/>
    </reaction>
</comment>
<comment type="pathway">
    <text evidence="1">Amine and polyamine biosynthesis; spermidine biosynthesis; spermidine from putrescine: step 1/1.</text>
</comment>
<comment type="subunit">
    <text evidence="1">Homodimer or homotetramer.</text>
</comment>
<comment type="subcellular location">
    <subcellularLocation>
        <location evidence="1">Cytoplasm</location>
    </subcellularLocation>
</comment>
<comment type="similarity">
    <text evidence="1">Belongs to the spermidine/spermine synthase family.</text>
</comment>
<evidence type="ECO:0000255" key="1">
    <source>
        <dbReference type="HAMAP-Rule" id="MF_00198"/>
    </source>
</evidence>
<protein>
    <recommendedName>
        <fullName evidence="1">Polyamine aminopropyltransferase</fullName>
    </recommendedName>
    <alternativeName>
        <fullName evidence="1">Putrescine aminopropyltransferase</fullName>
        <shortName evidence="1">PAPT</shortName>
    </alternativeName>
    <alternativeName>
        <fullName evidence="1">Spermidine synthase</fullName>
        <shortName evidence="1">SPDS</shortName>
        <shortName evidence="1">SPDSY</shortName>
        <ecNumber evidence="1">2.5.1.16</ecNumber>
    </alternativeName>
</protein>
<reference key="1">
    <citation type="submission" date="2007-06" db="EMBL/GenBank/DDBJ databases">
        <title>Complete sequence of Clostridium beijerinckii NCIMB 8052.</title>
        <authorList>
            <consortium name="US DOE Joint Genome Institute"/>
            <person name="Copeland A."/>
            <person name="Lucas S."/>
            <person name="Lapidus A."/>
            <person name="Barry K."/>
            <person name="Detter J.C."/>
            <person name="Glavina del Rio T."/>
            <person name="Hammon N."/>
            <person name="Israni S."/>
            <person name="Dalin E."/>
            <person name="Tice H."/>
            <person name="Pitluck S."/>
            <person name="Sims D."/>
            <person name="Brettin T."/>
            <person name="Bruce D."/>
            <person name="Tapia R."/>
            <person name="Brainard J."/>
            <person name="Schmutz J."/>
            <person name="Larimer F."/>
            <person name="Land M."/>
            <person name="Hauser L."/>
            <person name="Kyrpides N."/>
            <person name="Mikhailova N."/>
            <person name="Bennet G."/>
            <person name="Cann I."/>
            <person name="Chen J.-S."/>
            <person name="Contreras A.L."/>
            <person name="Jones D."/>
            <person name="Kashket E."/>
            <person name="Mitchell W."/>
            <person name="Stoddard S."/>
            <person name="Schwarz W."/>
            <person name="Qureshi N."/>
            <person name="Young M."/>
            <person name="Shi Z."/>
            <person name="Ezeji T."/>
            <person name="White B."/>
            <person name="Blaschek H."/>
            <person name="Richardson P."/>
        </authorList>
    </citation>
    <scope>NUCLEOTIDE SEQUENCE [LARGE SCALE GENOMIC DNA]</scope>
    <source>
        <strain>ATCC 51743 / NCIMB 8052</strain>
    </source>
</reference>
<feature type="chain" id="PRO_1000077707" description="Polyamine aminopropyltransferase">
    <location>
        <begin position="1"/>
        <end position="284"/>
    </location>
</feature>
<feature type="domain" description="PABS" evidence="1">
    <location>
        <begin position="2"/>
        <end position="237"/>
    </location>
</feature>
<feature type="active site" description="Proton acceptor" evidence="1">
    <location>
        <position position="155"/>
    </location>
</feature>
<feature type="binding site" evidence="1">
    <location>
        <position position="31"/>
    </location>
    <ligand>
        <name>S-methyl-5'-thioadenosine</name>
        <dbReference type="ChEBI" id="CHEBI:17509"/>
    </ligand>
</feature>
<feature type="binding site" evidence="1">
    <location>
        <position position="62"/>
    </location>
    <ligand>
        <name>spermidine</name>
        <dbReference type="ChEBI" id="CHEBI:57834"/>
    </ligand>
</feature>
<feature type="binding site" evidence="1">
    <location>
        <position position="86"/>
    </location>
    <ligand>
        <name>spermidine</name>
        <dbReference type="ChEBI" id="CHEBI:57834"/>
    </ligand>
</feature>
<feature type="binding site" evidence="1">
    <location>
        <position position="106"/>
    </location>
    <ligand>
        <name>S-methyl-5'-thioadenosine</name>
        <dbReference type="ChEBI" id="CHEBI:17509"/>
    </ligand>
</feature>
<feature type="binding site" evidence="1">
    <location>
        <begin position="137"/>
        <end position="138"/>
    </location>
    <ligand>
        <name>S-methyl-5'-thioadenosine</name>
        <dbReference type="ChEBI" id="CHEBI:17509"/>
    </ligand>
</feature>
<feature type="binding site" evidence="1">
    <location>
        <begin position="155"/>
        <end position="158"/>
    </location>
    <ligand>
        <name>spermidine</name>
        <dbReference type="ChEBI" id="CHEBI:57834"/>
    </ligand>
</feature>
<feature type="binding site" evidence="1">
    <location>
        <position position="162"/>
    </location>
    <ligand>
        <name>S-methyl-5'-thioadenosine</name>
        <dbReference type="ChEBI" id="CHEBI:17509"/>
    </ligand>
</feature>
<organism>
    <name type="scientific">Clostridium beijerinckii (strain ATCC 51743 / NCIMB 8052)</name>
    <name type="common">Clostridium acetobutylicum</name>
    <dbReference type="NCBI Taxonomy" id="290402"/>
    <lineage>
        <taxon>Bacteria</taxon>
        <taxon>Bacillati</taxon>
        <taxon>Bacillota</taxon>
        <taxon>Clostridia</taxon>
        <taxon>Eubacteriales</taxon>
        <taxon>Clostridiaceae</taxon>
        <taxon>Clostridium</taxon>
    </lineage>
</organism>
<sequence length="284" mass="33153">MELWYTEQHTENVRFSIKVEKEIHTEKTEFQRIDVLEAKEFGRFFTLDGLMMVTEKDEFIYHDMIVHVPMATNPNIKNVLVIGAGDGGTIRELTRYSTVEKIDMVEIDKRVVDICREYFPLTSCKLDDKRVNVFYEDGLKFIRDKEDEYDLIIVDSTDPFGPGEGLFTKEFYGNCYKALREDGILVNQHESPYYDNDAAAMKEAHEKITKFFPIIRVYQAHIPTYPSGHWLFGFASKKYHPIKDFDAEAWNKLGIKTKYYNTDLHVGCFALPTYVRDMLNGLTD</sequence>
<proteinExistence type="inferred from homology"/>